<comment type="function">
    <text evidence="1">Methyltransferase required for the conversion of demethylmenaquinol (DMKH2) to menaquinol (MKH2) and the conversion of 2-polyprenyl-6-methoxy-1,4-benzoquinol (DDMQH2) to 2-polyprenyl-3-methyl-6-methoxy-1,4-benzoquinol (DMQH2).</text>
</comment>
<comment type="catalytic activity">
    <reaction evidence="1">
        <text>a 2-demethylmenaquinol + S-adenosyl-L-methionine = a menaquinol + S-adenosyl-L-homocysteine + H(+)</text>
        <dbReference type="Rhea" id="RHEA:42640"/>
        <dbReference type="Rhea" id="RHEA-COMP:9539"/>
        <dbReference type="Rhea" id="RHEA-COMP:9563"/>
        <dbReference type="ChEBI" id="CHEBI:15378"/>
        <dbReference type="ChEBI" id="CHEBI:18151"/>
        <dbReference type="ChEBI" id="CHEBI:55437"/>
        <dbReference type="ChEBI" id="CHEBI:57856"/>
        <dbReference type="ChEBI" id="CHEBI:59789"/>
        <dbReference type="EC" id="2.1.1.163"/>
    </reaction>
</comment>
<comment type="catalytic activity">
    <reaction evidence="1">
        <text>a 2-methoxy-6-(all-trans-polyprenyl)benzene-1,4-diol + S-adenosyl-L-methionine = a 5-methoxy-2-methyl-3-(all-trans-polyprenyl)benzene-1,4-diol + S-adenosyl-L-homocysteine + H(+)</text>
        <dbReference type="Rhea" id="RHEA:28286"/>
        <dbReference type="Rhea" id="RHEA-COMP:10858"/>
        <dbReference type="Rhea" id="RHEA-COMP:10859"/>
        <dbReference type="ChEBI" id="CHEBI:15378"/>
        <dbReference type="ChEBI" id="CHEBI:57856"/>
        <dbReference type="ChEBI" id="CHEBI:59789"/>
        <dbReference type="ChEBI" id="CHEBI:84166"/>
        <dbReference type="ChEBI" id="CHEBI:84167"/>
        <dbReference type="EC" id="2.1.1.201"/>
    </reaction>
</comment>
<comment type="pathway">
    <text evidence="1">Quinol/quinone metabolism; menaquinone biosynthesis; menaquinol from 1,4-dihydroxy-2-naphthoate: step 2/2.</text>
</comment>
<comment type="pathway">
    <text evidence="1">Cofactor biosynthesis; ubiquinone biosynthesis.</text>
</comment>
<comment type="similarity">
    <text evidence="1">Belongs to the class I-like SAM-binding methyltransferase superfamily. MenG/UbiE family.</text>
</comment>
<organism>
    <name type="scientific">Escherichia coli O1:K1 / APEC</name>
    <dbReference type="NCBI Taxonomy" id="405955"/>
    <lineage>
        <taxon>Bacteria</taxon>
        <taxon>Pseudomonadati</taxon>
        <taxon>Pseudomonadota</taxon>
        <taxon>Gammaproteobacteria</taxon>
        <taxon>Enterobacterales</taxon>
        <taxon>Enterobacteriaceae</taxon>
        <taxon>Escherichia</taxon>
    </lineage>
</organism>
<name>UBIE_ECOK1</name>
<protein>
    <recommendedName>
        <fullName evidence="1">Ubiquinone/menaquinone biosynthesis C-methyltransferase UbiE</fullName>
        <ecNumber evidence="1">2.1.1.163</ecNumber>
        <ecNumber evidence="1">2.1.1.201</ecNumber>
    </recommendedName>
    <alternativeName>
        <fullName evidence="1">2-methoxy-6-polyprenyl-1,4-benzoquinol methylase</fullName>
    </alternativeName>
    <alternativeName>
        <fullName evidence="1">Demethylmenaquinone methyltransferase</fullName>
    </alternativeName>
</protein>
<dbReference type="EC" id="2.1.1.163" evidence="1"/>
<dbReference type="EC" id="2.1.1.201" evidence="1"/>
<dbReference type="EMBL" id="CP000468">
    <property type="protein sequence ID" value="ABJ03312.1"/>
    <property type="molecule type" value="Genomic_DNA"/>
</dbReference>
<dbReference type="RefSeq" id="WP_000227959.1">
    <property type="nucleotide sequence ID" value="NZ_CADILS010000045.1"/>
</dbReference>
<dbReference type="SMR" id="A1AI22"/>
<dbReference type="KEGG" id="ecv:APECO1_2622"/>
<dbReference type="HOGENOM" id="CLU_037990_0_0_6"/>
<dbReference type="UniPathway" id="UPA00079">
    <property type="reaction ID" value="UER00169"/>
</dbReference>
<dbReference type="UniPathway" id="UPA00232"/>
<dbReference type="Proteomes" id="UP000008216">
    <property type="component" value="Chromosome"/>
</dbReference>
<dbReference type="GO" id="GO:0008425">
    <property type="term" value="F:2-methoxy-6-polyprenyl-1,4-benzoquinol methyltransferase activity"/>
    <property type="evidence" value="ECO:0007669"/>
    <property type="project" value="UniProtKB-UniRule"/>
</dbReference>
<dbReference type="GO" id="GO:0043770">
    <property type="term" value="F:demethylmenaquinone methyltransferase activity"/>
    <property type="evidence" value="ECO:0007669"/>
    <property type="project" value="UniProtKB-UniRule"/>
</dbReference>
<dbReference type="GO" id="GO:0009060">
    <property type="term" value="P:aerobic respiration"/>
    <property type="evidence" value="ECO:0007669"/>
    <property type="project" value="UniProtKB-UniRule"/>
</dbReference>
<dbReference type="GO" id="GO:0009234">
    <property type="term" value="P:menaquinone biosynthetic process"/>
    <property type="evidence" value="ECO:0007669"/>
    <property type="project" value="UniProtKB-UniRule"/>
</dbReference>
<dbReference type="GO" id="GO:0032259">
    <property type="term" value="P:methylation"/>
    <property type="evidence" value="ECO:0007669"/>
    <property type="project" value="UniProtKB-KW"/>
</dbReference>
<dbReference type="CDD" id="cd02440">
    <property type="entry name" value="AdoMet_MTases"/>
    <property type="match status" value="1"/>
</dbReference>
<dbReference type="FunFam" id="3.40.50.150:FF:000014">
    <property type="entry name" value="Ubiquinone/menaquinone biosynthesis C-methyltransferase UbiE"/>
    <property type="match status" value="1"/>
</dbReference>
<dbReference type="Gene3D" id="3.40.50.150">
    <property type="entry name" value="Vaccinia Virus protein VP39"/>
    <property type="match status" value="1"/>
</dbReference>
<dbReference type="HAMAP" id="MF_01813">
    <property type="entry name" value="MenG_UbiE_methyltr"/>
    <property type="match status" value="1"/>
</dbReference>
<dbReference type="InterPro" id="IPR029063">
    <property type="entry name" value="SAM-dependent_MTases_sf"/>
</dbReference>
<dbReference type="InterPro" id="IPR004033">
    <property type="entry name" value="UbiE/COQ5_MeTrFase"/>
</dbReference>
<dbReference type="InterPro" id="IPR023576">
    <property type="entry name" value="UbiE/COQ5_MeTrFase_CS"/>
</dbReference>
<dbReference type="NCBIfam" id="TIGR01934">
    <property type="entry name" value="MenG_MenH_UbiE"/>
    <property type="match status" value="1"/>
</dbReference>
<dbReference type="NCBIfam" id="NF001240">
    <property type="entry name" value="PRK00216.1-1"/>
    <property type="match status" value="1"/>
</dbReference>
<dbReference type="NCBIfam" id="NF001242">
    <property type="entry name" value="PRK00216.1-3"/>
    <property type="match status" value="1"/>
</dbReference>
<dbReference type="NCBIfam" id="NF001244">
    <property type="entry name" value="PRK00216.1-5"/>
    <property type="match status" value="1"/>
</dbReference>
<dbReference type="PANTHER" id="PTHR43591:SF24">
    <property type="entry name" value="2-METHOXY-6-POLYPRENYL-1,4-BENZOQUINOL METHYLASE, MITOCHONDRIAL"/>
    <property type="match status" value="1"/>
</dbReference>
<dbReference type="PANTHER" id="PTHR43591">
    <property type="entry name" value="METHYLTRANSFERASE"/>
    <property type="match status" value="1"/>
</dbReference>
<dbReference type="Pfam" id="PF01209">
    <property type="entry name" value="Ubie_methyltran"/>
    <property type="match status" value="1"/>
</dbReference>
<dbReference type="SUPFAM" id="SSF53335">
    <property type="entry name" value="S-adenosyl-L-methionine-dependent methyltransferases"/>
    <property type="match status" value="1"/>
</dbReference>
<dbReference type="PROSITE" id="PS51608">
    <property type="entry name" value="SAM_MT_UBIE"/>
    <property type="match status" value="1"/>
</dbReference>
<dbReference type="PROSITE" id="PS01183">
    <property type="entry name" value="UBIE_1"/>
    <property type="match status" value="1"/>
</dbReference>
<dbReference type="PROSITE" id="PS01184">
    <property type="entry name" value="UBIE_2"/>
    <property type="match status" value="1"/>
</dbReference>
<proteinExistence type="inferred from homology"/>
<gene>
    <name evidence="1" type="primary">ubiE</name>
    <name type="ordered locus">Ecok1_38180</name>
    <name type="ORF">APECO1_2622</name>
</gene>
<sequence>MVDKSQETTHFGFQTVAKEQKADMVAHVFHSVASKYDVMNDLMSFGIHRLWKRFTIDCSGVRRGQTVLDLAGGTGDLTAKFSRLVGETGKVVLADINESMLKMGREKLRNIGVIGNVEYVQANAEALPFPDNTFDCITISFGLRNVTDKDKALRSMYRVLKPGGRLLVLEFSKPIIEPLSKAYDAYSFHVLPRIGSLVANDADSYRYLAESIRMHPDQDTLKTMMQDAGFESVDYYNLTAGVVALHRGYKF</sequence>
<feature type="chain" id="PRO_1000056244" description="Ubiquinone/menaquinone biosynthesis C-methyltransferase UbiE">
    <location>
        <begin position="1"/>
        <end position="251"/>
    </location>
</feature>
<feature type="binding site" evidence="1">
    <location>
        <position position="74"/>
    </location>
    <ligand>
        <name>S-adenosyl-L-methionine</name>
        <dbReference type="ChEBI" id="CHEBI:59789"/>
    </ligand>
</feature>
<feature type="binding site" evidence="1">
    <location>
        <position position="95"/>
    </location>
    <ligand>
        <name>S-adenosyl-L-methionine</name>
        <dbReference type="ChEBI" id="CHEBI:59789"/>
    </ligand>
</feature>
<feature type="binding site" evidence="1">
    <location>
        <begin position="123"/>
        <end position="124"/>
    </location>
    <ligand>
        <name>S-adenosyl-L-methionine</name>
        <dbReference type="ChEBI" id="CHEBI:59789"/>
    </ligand>
</feature>
<feature type="binding site" evidence="1">
    <location>
        <position position="140"/>
    </location>
    <ligand>
        <name>S-adenosyl-L-methionine</name>
        <dbReference type="ChEBI" id="CHEBI:59789"/>
    </ligand>
</feature>
<evidence type="ECO:0000255" key="1">
    <source>
        <dbReference type="HAMAP-Rule" id="MF_01813"/>
    </source>
</evidence>
<reference key="1">
    <citation type="journal article" date="2007" name="J. Bacteriol.">
        <title>The genome sequence of avian pathogenic Escherichia coli strain O1:K1:H7 shares strong similarities with human extraintestinal pathogenic E. coli genomes.</title>
        <authorList>
            <person name="Johnson T.J."/>
            <person name="Kariyawasam S."/>
            <person name="Wannemuehler Y."/>
            <person name="Mangiamele P."/>
            <person name="Johnson S.J."/>
            <person name="Doetkott C."/>
            <person name="Skyberg J.A."/>
            <person name="Lynne A.M."/>
            <person name="Johnson J.R."/>
            <person name="Nolan L.K."/>
        </authorList>
    </citation>
    <scope>NUCLEOTIDE SEQUENCE [LARGE SCALE GENOMIC DNA]</scope>
</reference>
<accession>A1AI22</accession>
<keyword id="KW-0474">Menaquinone biosynthesis</keyword>
<keyword id="KW-0489">Methyltransferase</keyword>
<keyword id="KW-1185">Reference proteome</keyword>
<keyword id="KW-0949">S-adenosyl-L-methionine</keyword>
<keyword id="KW-0808">Transferase</keyword>
<keyword id="KW-0831">Ubiquinone biosynthesis</keyword>